<comment type="function">
    <text evidence="1">Histone methyltransferase that methylates 'Lys-4' and 'Lys-36' of histone H3, 2 specific tags for epigenetic transcriptional activation. Specifically mediates dimethylation of H3 'Lys-36'.</text>
</comment>
<comment type="catalytic activity">
    <reaction evidence="1">
        <text>L-lysyl(36)-[histone H3] + 2 S-adenosyl-L-methionine = N(6),N(6)-dimethyl-L-lysyl(36)-[histone H3] + 2 S-adenosyl-L-homocysteine + 2 H(+)</text>
        <dbReference type="Rhea" id="RHEA:60308"/>
        <dbReference type="Rhea" id="RHEA-COMP:9785"/>
        <dbReference type="Rhea" id="RHEA-COMP:9787"/>
        <dbReference type="ChEBI" id="CHEBI:15378"/>
        <dbReference type="ChEBI" id="CHEBI:29969"/>
        <dbReference type="ChEBI" id="CHEBI:57856"/>
        <dbReference type="ChEBI" id="CHEBI:59789"/>
        <dbReference type="ChEBI" id="CHEBI:61976"/>
        <dbReference type="EC" id="2.1.1.357"/>
    </reaction>
</comment>
<comment type="subcellular location">
    <subcellularLocation>
        <location evidence="1">Nucleus</location>
    </subcellularLocation>
    <subcellularLocation>
        <location evidence="1">Chromosome</location>
    </subcellularLocation>
</comment>
<comment type="domain">
    <text evidence="1">In the pre-SET domain, Cys residues bind 3 zinc ions that are arranged in a triangular cluster; some of these Cys residues contribute to the binding of two zinc ions within the cluster.</text>
</comment>
<comment type="similarity">
    <text evidence="4">Belongs to the class V-like SAM-binding methyltransferase superfamily.</text>
</comment>
<sequence length="306" mass="34254">MATCEEVPEALKGQLDVARGLENLPVSAWPPGAEPEPFQYTPDHVAGPGADADPSQITFPGCACLKTPCLPGTCSCLRHENNYDDRSCLRDIGSEAKCTEPVFECNVLCQCSERCRNRVVQWGLQFHLQVFKTDHKGWGLRTLDFIPKGRFVCEYAGEVLGISEVQRRVQLQTIHDSNYIIAIREHVYNGQVMETFVDPASIGNIGRFLNHSCEPNLLMIPVRIDSMVPKLALFAARDILPEEELSYDYSGRFLNLMHSEDKERLDNGKLRKPCYCGARSCAAFLPYDSSLYCPTEKPDTSEEGRA</sequence>
<name>SETMR_BOVIN</name>
<dbReference type="EC" id="2.1.1.357" evidence="1"/>
<dbReference type="EMBL" id="BC119874">
    <property type="protein sequence ID" value="AAI19875.1"/>
    <property type="molecule type" value="mRNA"/>
</dbReference>
<dbReference type="RefSeq" id="NP_001068976.1">
    <property type="nucleotide sequence ID" value="NM_001075508.2"/>
</dbReference>
<dbReference type="SMR" id="Q0VD24"/>
<dbReference type="FunCoup" id="Q0VD24">
    <property type="interactions" value="58"/>
</dbReference>
<dbReference type="STRING" id="9913.ENSBTAP00000025200"/>
<dbReference type="PaxDb" id="9913-ENSBTAP00000025200"/>
<dbReference type="Ensembl" id="ENSBTAT00000025200.5">
    <property type="protein sequence ID" value="ENSBTAP00000025200.4"/>
    <property type="gene ID" value="ENSBTAG00000018935.5"/>
</dbReference>
<dbReference type="GeneID" id="511299"/>
<dbReference type="KEGG" id="bta:511299"/>
<dbReference type="CTD" id="6419"/>
<dbReference type="VEuPathDB" id="HostDB:ENSBTAG00000018935"/>
<dbReference type="eggNOG" id="KOG1082">
    <property type="taxonomic scope" value="Eukaryota"/>
</dbReference>
<dbReference type="GeneTree" id="ENSGT00940000162663"/>
<dbReference type="HOGENOM" id="CLU_020840_3_3_1"/>
<dbReference type="InParanoid" id="Q0VD24"/>
<dbReference type="OMA" id="VDSMVPK"/>
<dbReference type="OrthoDB" id="616263at2759"/>
<dbReference type="TreeFam" id="TF316038"/>
<dbReference type="Proteomes" id="UP000009136">
    <property type="component" value="Chromosome 22"/>
</dbReference>
<dbReference type="Bgee" id="ENSBTAG00000018935">
    <property type="expression patterns" value="Expressed in trachea and 108 other cell types or tissues"/>
</dbReference>
<dbReference type="GO" id="GO:0005694">
    <property type="term" value="C:chromosome"/>
    <property type="evidence" value="ECO:0007669"/>
    <property type="project" value="UniProtKB-SubCell"/>
</dbReference>
<dbReference type="GO" id="GO:0005634">
    <property type="term" value="C:nucleus"/>
    <property type="evidence" value="ECO:0007669"/>
    <property type="project" value="UniProtKB-SubCell"/>
</dbReference>
<dbReference type="GO" id="GO:0003690">
    <property type="term" value="F:double-stranded DNA binding"/>
    <property type="evidence" value="ECO:0000318"/>
    <property type="project" value="GO_Central"/>
</dbReference>
<dbReference type="GO" id="GO:0140954">
    <property type="term" value="F:histone H3K36 dimethyltransferase activity"/>
    <property type="evidence" value="ECO:0000250"/>
    <property type="project" value="UniProtKB"/>
</dbReference>
<dbReference type="GO" id="GO:0042800">
    <property type="term" value="F:histone H3K4 methyltransferase activity"/>
    <property type="evidence" value="ECO:0000250"/>
    <property type="project" value="UniProtKB"/>
</dbReference>
<dbReference type="GO" id="GO:0042054">
    <property type="term" value="F:histone methyltransferase activity"/>
    <property type="evidence" value="ECO:0000318"/>
    <property type="project" value="GO_Central"/>
</dbReference>
<dbReference type="GO" id="GO:0008270">
    <property type="term" value="F:zinc ion binding"/>
    <property type="evidence" value="ECO:0007669"/>
    <property type="project" value="InterPro"/>
</dbReference>
<dbReference type="GO" id="GO:0032259">
    <property type="term" value="P:methylation"/>
    <property type="evidence" value="ECO:0007669"/>
    <property type="project" value="UniProtKB-KW"/>
</dbReference>
<dbReference type="CDD" id="cd10544">
    <property type="entry name" value="SET_SETMAR"/>
    <property type="match status" value="1"/>
</dbReference>
<dbReference type="FunFam" id="2.170.270.10:FF:000041">
    <property type="entry name" value="Histone-lysine N-methyltransferase SETMAR"/>
    <property type="match status" value="1"/>
</dbReference>
<dbReference type="Gene3D" id="2.170.270.10">
    <property type="entry name" value="SET domain"/>
    <property type="match status" value="1"/>
</dbReference>
<dbReference type="InterPro" id="IPR050973">
    <property type="entry name" value="H3K9_Histone-Lys_N-MTase"/>
</dbReference>
<dbReference type="InterPro" id="IPR003616">
    <property type="entry name" value="Post-SET_dom"/>
</dbReference>
<dbReference type="InterPro" id="IPR007728">
    <property type="entry name" value="Pre-SET_dom"/>
</dbReference>
<dbReference type="InterPro" id="IPR001214">
    <property type="entry name" value="SET_dom"/>
</dbReference>
<dbReference type="InterPro" id="IPR046341">
    <property type="entry name" value="SET_dom_sf"/>
</dbReference>
<dbReference type="PANTHER" id="PTHR46223:SF3">
    <property type="entry name" value="HISTONE-LYSINE N-METHYLTRANSFERASE SET-23"/>
    <property type="match status" value="1"/>
</dbReference>
<dbReference type="PANTHER" id="PTHR46223">
    <property type="entry name" value="HISTONE-LYSINE N-METHYLTRANSFERASE SUV39H"/>
    <property type="match status" value="1"/>
</dbReference>
<dbReference type="Pfam" id="PF05033">
    <property type="entry name" value="Pre-SET"/>
    <property type="match status" value="1"/>
</dbReference>
<dbReference type="Pfam" id="PF00856">
    <property type="entry name" value="SET"/>
    <property type="match status" value="1"/>
</dbReference>
<dbReference type="SMART" id="SM00468">
    <property type="entry name" value="PreSET"/>
    <property type="match status" value="1"/>
</dbReference>
<dbReference type="SMART" id="SM00317">
    <property type="entry name" value="SET"/>
    <property type="match status" value="1"/>
</dbReference>
<dbReference type="SUPFAM" id="SSF82199">
    <property type="entry name" value="SET domain"/>
    <property type="match status" value="1"/>
</dbReference>
<dbReference type="PROSITE" id="PS50868">
    <property type="entry name" value="POST_SET"/>
    <property type="match status" value="1"/>
</dbReference>
<dbReference type="PROSITE" id="PS50867">
    <property type="entry name" value="PRE_SET"/>
    <property type="match status" value="1"/>
</dbReference>
<dbReference type="PROSITE" id="PS50280">
    <property type="entry name" value="SET"/>
    <property type="match status" value="1"/>
</dbReference>
<keyword id="KW-0156">Chromatin regulator</keyword>
<keyword id="KW-0158">Chromosome</keyword>
<keyword id="KW-0479">Metal-binding</keyword>
<keyword id="KW-0489">Methyltransferase</keyword>
<keyword id="KW-0539">Nucleus</keyword>
<keyword id="KW-1185">Reference proteome</keyword>
<keyword id="KW-0949">S-adenosyl-L-methionine</keyword>
<keyword id="KW-0808">Transferase</keyword>
<keyword id="KW-0862">Zinc</keyword>
<organism>
    <name type="scientific">Bos taurus</name>
    <name type="common">Bovine</name>
    <dbReference type="NCBI Taxonomy" id="9913"/>
    <lineage>
        <taxon>Eukaryota</taxon>
        <taxon>Metazoa</taxon>
        <taxon>Chordata</taxon>
        <taxon>Craniata</taxon>
        <taxon>Vertebrata</taxon>
        <taxon>Euteleostomi</taxon>
        <taxon>Mammalia</taxon>
        <taxon>Eutheria</taxon>
        <taxon>Laurasiatheria</taxon>
        <taxon>Artiodactyla</taxon>
        <taxon>Ruminantia</taxon>
        <taxon>Pecora</taxon>
        <taxon>Bovidae</taxon>
        <taxon>Bovinae</taxon>
        <taxon>Bos</taxon>
    </lineage>
</organism>
<proteinExistence type="evidence at transcript level"/>
<protein>
    <recommendedName>
        <fullName evidence="5">Histone-lysine N-methyltransferase SETMAR</fullName>
        <ecNumber evidence="1">2.1.1.357</ecNumber>
    </recommendedName>
    <alternativeName>
        <fullName>SET domain and mariner transposase fusion protein homolog</fullName>
    </alternativeName>
</protein>
<gene>
    <name evidence="5" type="primary">SETMAR</name>
</gene>
<feature type="chain" id="PRO_0000259525" description="Histone-lysine N-methyltransferase SETMAR">
    <location>
        <begin position="1"/>
        <end position="306"/>
    </location>
</feature>
<feature type="domain" description="Pre-SET" evidence="3">
    <location>
        <begin position="60"/>
        <end position="123"/>
    </location>
</feature>
<feature type="domain" description="SET" evidence="4">
    <location>
        <begin position="126"/>
        <end position="250"/>
    </location>
</feature>
<feature type="domain" description="Post-SET" evidence="2">
    <location>
        <begin position="270"/>
        <end position="286"/>
    </location>
</feature>
<feature type="binding site" evidence="1">
    <location>
        <position position="62"/>
    </location>
    <ligand>
        <name>Zn(2+)</name>
        <dbReference type="ChEBI" id="CHEBI:29105"/>
        <label>1</label>
    </ligand>
</feature>
<feature type="binding site" evidence="1">
    <location>
        <position position="62"/>
    </location>
    <ligand>
        <name>Zn(2+)</name>
        <dbReference type="ChEBI" id="CHEBI:29105"/>
        <label>2</label>
    </ligand>
</feature>
<feature type="binding site" evidence="1">
    <location>
        <position position="64"/>
    </location>
    <ligand>
        <name>Zn(2+)</name>
        <dbReference type="ChEBI" id="CHEBI:29105"/>
        <label>1</label>
    </ligand>
</feature>
<feature type="binding site" evidence="1">
    <location>
        <position position="69"/>
    </location>
    <ligand>
        <name>Zn(2+)</name>
        <dbReference type="ChEBI" id="CHEBI:29105"/>
        <label>1</label>
    </ligand>
</feature>
<feature type="binding site" evidence="1">
    <location>
        <position position="69"/>
    </location>
    <ligand>
        <name>Zn(2+)</name>
        <dbReference type="ChEBI" id="CHEBI:29105"/>
        <label>3</label>
    </ligand>
</feature>
<feature type="binding site" evidence="1">
    <location>
        <position position="74"/>
    </location>
    <ligand>
        <name>Zn(2+)</name>
        <dbReference type="ChEBI" id="CHEBI:29105"/>
        <label>1</label>
    </ligand>
</feature>
<feature type="binding site" evidence="1">
    <location>
        <position position="76"/>
    </location>
    <ligand>
        <name>Zn(2+)</name>
        <dbReference type="ChEBI" id="CHEBI:29105"/>
        <label>2</label>
    </ligand>
</feature>
<feature type="binding site" evidence="1">
    <location>
        <position position="105"/>
    </location>
    <ligand>
        <name>Zn(2+)</name>
        <dbReference type="ChEBI" id="CHEBI:29105"/>
        <label>2</label>
    </ligand>
</feature>
<feature type="binding site" evidence="1">
    <location>
        <position position="105"/>
    </location>
    <ligand>
        <name>Zn(2+)</name>
        <dbReference type="ChEBI" id="CHEBI:29105"/>
        <label>3</label>
    </ligand>
</feature>
<feature type="binding site" evidence="1">
    <location>
        <position position="109"/>
    </location>
    <ligand>
        <name>Zn(2+)</name>
        <dbReference type="ChEBI" id="CHEBI:29105"/>
        <label>2</label>
    </ligand>
</feature>
<feature type="binding site" evidence="1">
    <location>
        <position position="111"/>
    </location>
    <ligand>
        <name>Zn(2+)</name>
        <dbReference type="ChEBI" id="CHEBI:29105"/>
        <label>3</label>
    </ligand>
</feature>
<feature type="binding site" evidence="1">
    <location>
        <position position="115"/>
    </location>
    <ligand>
        <name>Zn(2+)</name>
        <dbReference type="ChEBI" id="CHEBI:29105"/>
        <label>3</label>
    </ligand>
</feature>
<feature type="binding site" evidence="1">
    <location>
        <begin position="136"/>
        <end position="138"/>
    </location>
    <ligand>
        <name>S-adenosyl-L-methionine</name>
        <dbReference type="ChEBI" id="CHEBI:59789"/>
    </ligand>
</feature>
<feature type="binding site" evidence="4">
    <location>
        <position position="179"/>
    </location>
    <ligand>
        <name>S-adenosyl-L-methionine</name>
        <dbReference type="ChEBI" id="CHEBI:59789"/>
    </ligand>
</feature>
<feature type="binding site" evidence="4">
    <location>
        <position position="207"/>
    </location>
    <ligand>
        <name>S-adenosyl-L-methionine</name>
        <dbReference type="ChEBI" id="CHEBI:59789"/>
    </ligand>
</feature>
<feature type="binding site" evidence="1">
    <location>
        <begin position="210"/>
        <end position="211"/>
    </location>
    <ligand>
        <name>S-adenosyl-L-methionine</name>
        <dbReference type="ChEBI" id="CHEBI:59789"/>
    </ligand>
</feature>
<feature type="binding site" evidence="1">
    <location>
        <position position="213"/>
    </location>
    <ligand>
        <name>Zn(2+)</name>
        <dbReference type="ChEBI" id="CHEBI:29105"/>
        <label>4</label>
    </ligand>
</feature>
<feature type="binding site" evidence="1">
    <location>
        <position position="274"/>
    </location>
    <ligand>
        <name>Zn(2+)</name>
        <dbReference type="ChEBI" id="CHEBI:29105"/>
        <label>4</label>
    </ligand>
</feature>
<feature type="binding site" evidence="1">
    <location>
        <position position="276"/>
    </location>
    <ligand>
        <name>Zn(2+)</name>
        <dbReference type="ChEBI" id="CHEBI:29105"/>
        <label>4</label>
    </ligand>
</feature>
<feature type="binding site" evidence="1">
    <location>
        <position position="281"/>
    </location>
    <ligand>
        <name>Zn(2+)</name>
        <dbReference type="ChEBI" id="CHEBI:29105"/>
        <label>4</label>
    </ligand>
</feature>
<accession>Q0VD24</accession>
<reference key="1">
    <citation type="submission" date="2006-08" db="EMBL/GenBank/DDBJ databases">
        <authorList>
            <consortium name="NIH - Mammalian Gene Collection (MGC) project"/>
        </authorList>
    </citation>
    <scope>NUCLEOTIDE SEQUENCE [LARGE SCALE MRNA]</scope>
    <source>
        <strain>Hereford</strain>
        <tissue>Thalamus</tissue>
    </source>
</reference>
<evidence type="ECO:0000250" key="1">
    <source>
        <dbReference type="UniProtKB" id="Q53H47"/>
    </source>
</evidence>
<evidence type="ECO:0000255" key="2">
    <source>
        <dbReference type="PROSITE-ProRule" id="PRU00155"/>
    </source>
</evidence>
<evidence type="ECO:0000255" key="3">
    <source>
        <dbReference type="PROSITE-ProRule" id="PRU00157"/>
    </source>
</evidence>
<evidence type="ECO:0000255" key="4">
    <source>
        <dbReference type="PROSITE-ProRule" id="PRU00190"/>
    </source>
</evidence>
<evidence type="ECO:0000305" key="5"/>